<keyword id="KW-0002">3D-structure</keyword>
<keyword id="KW-0025">Alternative splicing</keyword>
<keyword id="KW-1015">Disulfide bond</keyword>
<keyword id="KW-1267">Proteomics identification</keyword>
<keyword id="KW-1185">Reference proteome</keyword>
<keyword id="KW-0964">Secreted</keyword>
<keyword id="KW-0732">Signal</keyword>
<accession>P16562</accession>
<accession>A8K8M0</accession>
<accession>Q53FF2</accession>
<accession>Q5U8Z9</accession>
<accession>Q7Z7B2</accession>
<feature type="signal peptide" evidence="2">
    <location>
        <begin position="1"/>
        <end position="21"/>
    </location>
</feature>
<feature type="chain" id="PRO_0000006264" description="Cysteine-rich secretory protein 2">
    <location>
        <begin position="22"/>
        <end position="243"/>
    </location>
</feature>
<feature type="domain" description="SCP">
    <location>
        <begin position="41"/>
        <end position="169"/>
    </location>
</feature>
<feature type="domain" description="ShKT" evidence="3">
    <location>
        <begin position="205"/>
        <end position="238"/>
    </location>
</feature>
<feature type="disulfide bond" evidence="3">
    <location>
        <begin position="189"/>
        <end position="196"/>
    </location>
</feature>
<feature type="disulfide bond" evidence="3">
    <location>
        <begin position="192"/>
        <end position="201"/>
    </location>
</feature>
<feature type="disulfide bond" evidence="3">
    <location>
        <begin position="205"/>
        <end position="238"/>
    </location>
</feature>
<feature type="disulfide bond" evidence="3">
    <location>
        <begin position="214"/>
        <end position="232"/>
    </location>
</feature>
<feature type="disulfide bond" evidence="3">
    <location>
        <begin position="223"/>
        <end position="236"/>
    </location>
</feature>
<feature type="splice variant" id="VSP_053891" description="In isoform 2." evidence="4">
    <original>A</original>
    <variation>AMKTYLNKREGINVWKCFLRLRHFQLLRGEQLLTFS</variation>
    <location>
        <position position="172"/>
    </location>
</feature>
<feature type="sequence variant" id="VAR_048832" description="In dbSNP:rs34457011.">
    <original>N</original>
    <variation>S</variation>
    <location>
        <position position="131"/>
    </location>
</feature>
<feature type="sequence conflict" description="In Ref. 4; BAF85074." evidence="5" ref="4">
    <original>S</original>
    <variation>C</variation>
    <location>
        <position position="64"/>
    </location>
</feature>
<feature type="sequence conflict" description="In Ref. 5; BAD97057." evidence="5" ref="5">
    <original>R</original>
    <variation>C</variation>
    <location>
        <position position="88"/>
    </location>
</feature>
<feature type="strand" evidence="6">
    <location>
        <begin position="210"/>
        <end position="213"/>
    </location>
</feature>
<feature type="helix" evidence="6">
    <location>
        <begin position="214"/>
        <end position="218"/>
    </location>
</feature>
<feature type="turn" evidence="6">
    <location>
        <begin position="219"/>
        <end position="221"/>
    </location>
</feature>
<feature type="strand" evidence="6">
    <location>
        <begin position="225"/>
        <end position="230"/>
    </location>
</feature>
<feature type="helix" evidence="6">
    <location>
        <begin position="233"/>
        <end position="236"/>
    </location>
</feature>
<evidence type="ECO:0000250" key="1"/>
<evidence type="ECO:0000255" key="2"/>
<evidence type="ECO:0000255" key="3">
    <source>
        <dbReference type="PROSITE-ProRule" id="PRU01005"/>
    </source>
</evidence>
<evidence type="ECO:0000303" key="4">
    <source ref="3"/>
</evidence>
<evidence type="ECO:0000305" key="5"/>
<evidence type="ECO:0007829" key="6">
    <source>
        <dbReference type="PDB" id="2CQ7"/>
    </source>
</evidence>
<comment type="function">
    <text evidence="1">May regulate some ion channels' activity and thereby regulate calcium fluxes during sperm capacitation.</text>
</comment>
<comment type="subunit">
    <text evidence="1">Interacts with NSUN4 isoform 3.</text>
</comment>
<comment type="subcellular location">
    <subcellularLocation>
        <location evidence="5">Secreted</location>
    </subcellularLocation>
</comment>
<comment type="alternative products">
    <event type="alternative splicing"/>
    <isoform>
        <id>P16562-1</id>
        <name>1</name>
        <sequence type="displayed"/>
    </isoform>
    <isoform>
        <id>P16562-2</id>
        <name>2</name>
        <sequence type="described" ref="VSP_053891"/>
    </isoform>
</comment>
<comment type="tissue specificity">
    <text>Testis and epididymis.</text>
</comment>
<comment type="similarity">
    <text evidence="5">Belongs to the CRISP family.</text>
</comment>
<dbReference type="EMBL" id="M25532">
    <property type="protein sequence ID" value="AAA61220.1"/>
    <property type="molecule type" value="mRNA"/>
</dbReference>
<dbReference type="EMBL" id="X95239">
    <property type="protein sequence ID" value="CAA64526.1"/>
    <property type="molecule type" value="mRNA"/>
</dbReference>
<dbReference type="EMBL" id="AY289796">
    <property type="protein sequence ID" value="AAP41200.1"/>
    <property type="molecule type" value="mRNA"/>
</dbReference>
<dbReference type="EMBL" id="AY292862">
    <property type="protein sequence ID" value="AAP44113.1"/>
    <property type="molecule type" value="mRNA"/>
</dbReference>
<dbReference type="EMBL" id="AY292863">
    <property type="protein sequence ID" value="AAP44114.1"/>
    <property type="molecule type" value="mRNA"/>
</dbReference>
<dbReference type="EMBL" id="AY773479">
    <property type="protein sequence ID" value="AAV48552.1"/>
    <property type="molecule type" value="mRNA"/>
</dbReference>
<dbReference type="EMBL" id="AK292385">
    <property type="protein sequence ID" value="BAF85074.1"/>
    <property type="molecule type" value="mRNA"/>
</dbReference>
<dbReference type="EMBL" id="AK223337">
    <property type="protein sequence ID" value="BAD97057.1"/>
    <property type="molecule type" value="mRNA"/>
</dbReference>
<dbReference type="EMBL" id="AL121950">
    <property type="status" value="NOT_ANNOTATED_CDS"/>
    <property type="molecule type" value="Genomic_DNA"/>
</dbReference>
<dbReference type="EMBL" id="CH471081">
    <property type="protein sequence ID" value="EAX04340.1"/>
    <property type="molecule type" value="Genomic_DNA"/>
</dbReference>
<dbReference type="EMBL" id="CH471081">
    <property type="protein sequence ID" value="EAX04345.1"/>
    <property type="molecule type" value="Genomic_DNA"/>
</dbReference>
<dbReference type="EMBL" id="BC022011">
    <property type="protein sequence ID" value="AAH22011.1"/>
    <property type="molecule type" value="mRNA"/>
</dbReference>
<dbReference type="EMBL" id="BC107707">
    <property type="protein sequence ID" value="AAI07708.1"/>
    <property type="molecule type" value="mRNA"/>
</dbReference>
<dbReference type="CCDS" id="CCDS4928.1">
    <molecule id="P16562-1"/>
</dbReference>
<dbReference type="PIR" id="B33329">
    <property type="entry name" value="B33329"/>
</dbReference>
<dbReference type="RefSeq" id="NP_001135879.1">
    <molecule id="P16562-1"/>
    <property type="nucleotide sequence ID" value="NM_001142407.3"/>
</dbReference>
<dbReference type="RefSeq" id="NP_001135880.1">
    <molecule id="P16562-1"/>
    <property type="nucleotide sequence ID" value="NM_001142408.3"/>
</dbReference>
<dbReference type="RefSeq" id="NP_001135889.1">
    <molecule id="P16562-1"/>
    <property type="nucleotide sequence ID" value="NM_001142417.3"/>
</dbReference>
<dbReference type="RefSeq" id="NP_001135907.1">
    <molecule id="P16562-1"/>
    <property type="nucleotide sequence ID" value="NM_001142435.3"/>
</dbReference>
<dbReference type="RefSeq" id="NP_001248751.1">
    <molecule id="P16562-1"/>
    <property type="nucleotide sequence ID" value="NM_001261822.2"/>
</dbReference>
<dbReference type="RefSeq" id="NP_003287.1">
    <molecule id="P16562-1"/>
    <property type="nucleotide sequence ID" value="NM_003296.4"/>
</dbReference>
<dbReference type="RefSeq" id="XP_005249406.1">
    <molecule id="P16562-2"/>
    <property type="nucleotide sequence ID" value="XM_005249349.2"/>
</dbReference>
<dbReference type="RefSeq" id="XP_005249407.1">
    <property type="nucleotide sequence ID" value="XM_005249350.1"/>
</dbReference>
<dbReference type="RefSeq" id="XP_005249408.1">
    <molecule id="P16562-2"/>
    <property type="nucleotide sequence ID" value="XM_005249351.4"/>
</dbReference>
<dbReference type="RefSeq" id="XP_005249409.1">
    <property type="nucleotide sequence ID" value="XM_005249352.3"/>
</dbReference>
<dbReference type="RefSeq" id="XP_005249410.1">
    <molecule id="P16562-2"/>
    <property type="nucleotide sequence ID" value="XM_005249353.5"/>
</dbReference>
<dbReference type="RefSeq" id="XP_005249413.1">
    <molecule id="P16562-2"/>
    <property type="nucleotide sequence ID" value="XM_005249356.2"/>
</dbReference>
<dbReference type="RefSeq" id="XP_011513143.1">
    <molecule id="P16562-2"/>
    <property type="nucleotide sequence ID" value="XM_011514841.2"/>
</dbReference>
<dbReference type="RefSeq" id="XP_011513144.1">
    <property type="nucleotide sequence ID" value="XM_011514842.1"/>
</dbReference>
<dbReference type="RefSeq" id="XP_054212275.1">
    <molecule id="P16562-2"/>
    <property type="nucleotide sequence ID" value="XM_054356300.1"/>
</dbReference>
<dbReference type="RefSeq" id="XP_054212276.1">
    <molecule id="P16562-2"/>
    <property type="nucleotide sequence ID" value="XM_054356301.1"/>
</dbReference>
<dbReference type="RefSeq" id="XP_054212277.1">
    <molecule id="P16562-2"/>
    <property type="nucleotide sequence ID" value="XM_054356302.1"/>
</dbReference>
<dbReference type="RefSeq" id="XP_054212278.1">
    <molecule id="P16562-2"/>
    <property type="nucleotide sequence ID" value="XM_054356303.1"/>
</dbReference>
<dbReference type="RefSeq" id="XP_054212279.1">
    <molecule id="P16562-2"/>
    <property type="nucleotide sequence ID" value="XM_054356304.1"/>
</dbReference>
<dbReference type="PDB" id="2CQ7">
    <property type="method" value="NMR"/>
    <property type="chains" value="A=204-239"/>
</dbReference>
<dbReference type="PDBsum" id="2CQ7"/>
<dbReference type="SMR" id="P16562"/>
<dbReference type="BioGRID" id="113032">
    <property type="interactions" value="55"/>
</dbReference>
<dbReference type="FunCoup" id="P16562">
    <property type="interactions" value="42"/>
</dbReference>
<dbReference type="IntAct" id="P16562">
    <property type="interactions" value="38"/>
</dbReference>
<dbReference type="STRING" id="9606.ENSP00000484609"/>
<dbReference type="iPTMnet" id="P16562"/>
<dbReference type="PhosphoSitePlus" id="P16562"/>
<dbReference type="BioMuta" id="CRISP2"/>
<dbReference type="DMDM" id="136111"/>
<dbReference type="jPOST" id="P16562"/>
<dbReference type="MassIVE" id="P16562"/>
<dbReference type="PaxDb" id="9606-ENSP00000339155"/>
<dbReference type="PeptideAtlas" id="P16562"/>
<dbReference type="ProteomicsDB" id="53380">
    <molecule id="P16562-1"/>
</dbReference>
<dbReference type="ProteomicsDB" id="69511"/>
<dbReference type="Antibodypedia" id="30834">
    <property type="antibodies" value="227 antibodies from 36 providers"/>
</dbReference>
<dbReference type="DNASU" id="7180"/>
<dbReference type="Ensembl" id="ENST00000339139.5">
    <molecule id="P16562-1"/>
    <property type="protein sequence ID" value="ENSP00000339155.4"/>
    <property type="gene ID" value="ENSG00000124490.14"/>
</dbReference>
<dbReference type="Ensembl" id="ENST00000616725.4">
    <molecule id="P16562-1"/>
    <property type="protein sequence ID" value="ENSP00000484609.1"/>
    <property type="gene ID" value="ENSG00000124490.14"/>
</dbReference>
<dbReference type="Ensembl" id="ENST00000618917.4">
    <molecule id="P16562-2"/>
    <property type="protein sequence ID" value="ENSP00000482890.1"/>
    <property type="gene ID" value="ENSG00000124490.14"/>
</dbReference>
<dbReference type="GeneID" id="7180"/>
<dbReference type="KEGG" id="hsa:7180"/>
<dbReference type="MANE-Select" id="ENST00000339139.5">
    <property type="protein sequence ID" value="ENSP00000339155.4"/>
    <property type="RefSeq nucleotide sequence ID" value="NM_003296.4"/>
    <property type="RefSeq protein sequence ID" value="NP_003287.1"/>
</dbReference>
<dbReference type="UCSC" id="uc003ozl.4">
    <molecule id="P16562-1"/>
    <property type="organism name" value="human"/>
</dbReference>
<dbReference type="AGR" id="HGNC:12024"/>
<dbReference type="CTD" id="7180"/>
<dbReference type="DisGeNET" id="7180"/>
<dbReference type="GeneCards" id="CRISP2"/>
<dbReference type="HGNC" id="HGNC:12024">
    <property type="gene designation" value="CRISP2"/>
</dbReference>
<dbReference type="HPA" id="ENSG00000124490">
    <property type="expression patterns" value="Tissue enriched (testis)"/>
</dbReference>
<dbReference type="MIM" id="187430">
    <property type="type" value="gene"/>
</dbReference>
<dbReference type="neXtProt" id="NX_P16562"/>
<dbReference type="OpenTargets" id="ENSG00000124490"/>
<dbReference type="PharmGKB" id="PA36703"/>
<dbReference type="VEuPathDB" id="HostDB:ENSG00000124490"/>
<dbReference type="eggNOG" id="KOG3017">
    <property type="taxonomic scope" value="Eukaryota"/>
</dbReference>
<dbReference type="GeneTree" id="ENSGT00940000156439"/>
<dbReference type="HOGENOM" id="CLU_035730_2_1_1"/>
<dbReference type="InParanoid" id="P16562"/>
<dbReference type="OMA" id="CTNSCEF"/>
<dbReference type="OrthoDB" id="737510at2759"/>
<dbReference type="PAN-GO" id="P16562">
    <property type="GO annotations" value="1 GO annotation based on evolutionary models"/>
</dbReference>
<dbReference type="PhylomeDB" id="P16562"/>
<dbReference type="TreeFam" id="TF316148"/>
<dbReference type="PathwayCommons" id="P16562"/>
<dbReference type="SignaLink" id="P16562"/>
<dbReference type="BioGRID-ORCS" id="7180">
    <property type="hits" value="10 hits in 1136 CRISPR screens"/>
</dbReference>
<dbReference type="EvolutionaryTrace" id="P16562"/>
<dbReference type="GeneWiki" id="CRISP2"/>
<dbReference type="GenomeRNAi" id="7180"/>
<dbReference type="Pharos" id="P16562">
    <property type="development level" value="Tbio"/>
</dbReference>
<dbReference type="PRO" id="PR:P16562"/>
<dbReference type="Proteomes" id="UP000005640">
    <property type="component" value="Chromosome 6"/>
</dbReference>
<dbReference type="RNAct" id="P16562">
    <property type="molecule type" value="protein"/>
</dbReference>
<dbReference type="Bgee" id="ENSG00000124490">
    <property type="expression patterns" value="Expressed in sperm and 118 other cell types or tissues"/>
</dbReference>
<dbReference type="ExpressionAtlas" id="P16562">
    <property type="expression patterns" value="baseline and differential"/>
</dbReference>
<dbReference type="GO" id="GO:0005615">
    <property type="term" value="C:extracellular space"/>
    <property type="evidence" value="ECO:0000318"/>
    <property type="project" value="GO_Central"/>
</dbReference>
<dbReference type="GO" id="GO:0019953">
    <property type="term" value="P:sexual reproduction"/>
    <property type="evidence" value="ECO:0000318"/>
    <property type="project" value="GO_Central"/>
</dbReference>
<dbReference type="CDD" id="cd05383">
    <property type="entry name" value="CAP_CRISP"/>
    <property type="match status" value="1"/>
</dbReference>
<dbReference type="FunFam" id="1.10.10.740:FF:000001">
    <property type="entry name" value="Cysteine-rich secretory protein 2"/>
    <property type="match status" value="1"/>
</dbReference>
<dbReference type="FunFam" id="3.40.33.10:FF:000005">
    <property type="entry name" value="Cysteine-rich secretory protein 2"/>
    <property type="match status" value="1"/>
</dbReference>
<dbReference type="Gene3D" id="3.40.33.10">
    <property type="entry name" value="CAP"/>
    <property type="match status" value="1"/>
</dbReference>
<dbReference type="Gene3D" id="1.10.10.740">
    <property type="entry name" value="Crisp domain"/>
    <property type="match status" value="1"/>
</dbReference>
<dbReference type="InterPro" id="IPR018244">
    <property type="entry name" value="Allrgn_V5/Tpx1_CS"/>
</dbReference>
<dbReference type="InterPro" id="IPR014044">
    <property type="entry name" value="CAP_dom"/>
</dbReference>
<dbReference type="InterPro" id="IPR035940">
    <property type="entry name" value="CAP_sf"/>
</dbReference>
<dbReference type="InterPro" id="IPR042076">
    <property type="entry name" value="Crisp-like_dom"/>
</dbReference>
<dbReference type="InterPro" id="IPR001283">
    <property type="entry name" value="CRISP-related"/>
</dbReference>
<dbReference type="InterPro" id="IPR013871">
    <property type="entry name" value="Cysteine_rich_secretory"/>
</dbReference>
<dbReference type="InterPro" id="IPR034117">
    <property type="entry name" value="SCP_CRISP"/>
</dbReference>
<dbReference type="InterPro" id="IPR003582">
    <property type="entry name" value="ShKT_dom"/>
</dbReference>
<dbReference type="PANTHER" id="PTHR10334">
    <property type="entry name" value="CYSTEINE-RICH SECRETORY PROTEIN-RELATED"/>
    <property type="match status" value="1"/>
</dbReference>
<dbReference type="Pfam" id="PF00188">
    <property type="entry name" value="CAP"/>
    <property type="match status" value="1"/>
</dbReference>
<dbReference type="Pfam" id="PF08562">
    <property type="entry name" value="Crisp"/>
    <property type="match status" value="1"/>
</dbReference>
<dbReference type="PRINTS" id="PR00837">
    <property type="entry name" value="V5TPXLIKE"/>
</dbReference>
<dbReference type="SMART" id="SM00198">
    <property type="entry name" value="SCP"/>
    <property type="match status" value="1"/>
</dbReference>
<dbReference type="SUPFAM" id="SSF57546">
    <property type="entry name" value="Crisp domain-like"/>
    <property type="match status" value="1"/>
</dbReference>
<dbReference type="SUPFAM" id="SSF55797">
    <property type="entry name" value="PR-1-like"/>
    <property type="match status" value="1"/>
</dbReference>
<dbReference type="PROSITE" id="PS01009">
    <property type="entry name" value="CRISP_1"/>
    <property type="match status" value="1"/>
</dbReference>
<dbReference type="PROSITE" id="PS01010">
    <property type="entry name" value="CRISP_2"/>
    <property type="match status" value="1"/>
</dbReference>
<dbReference type="PROSITE" id="PS51670">
    <property type="entry name" value="SHKT"/>
    <property type="match status" value="1"/>
</dbReference>
<gene>
    <name type="primary">CRISP2</name>
    <name type="synonym">GAPDL5</name>
    <name type="synonym">TPX1</name>
</gene>
<name>CRIS2_HUMAN</name>
<reference key="1">
    <citation type="journal article" date="1989" name="Genomics">
        <title>Cloning and mapping of a testis-specific gene with sequence similarity to a sperm-coating glycoprotein gene.</title>
        <authorList>
            <person name="Kasahara M."/>
            <person name="Gutknecht J."/>
            <person name="Brew K."/>
            <person name="Spurr N."/>
            <person name="Goodfellow P.N."/>
        </authorList>
    </citation>
    <scope>NUCLEOTIDE SEQUENCE [MRNA] (ISOFORM 1)</scope>
    <source>
        <tissue>Testis</tissue>
    </source>
</reference>
<reference key="2">
    <citation type="journal article" date="1996" name="Eur. J. Biochem.">
        <title>The human cysteine-rich secretory protein (CRISP) family. Primary structure and tissue distribution of CRISP-1, CRISP-2 and CRISP-3.</title>
        <authorList>
            <person name="Kraetzschmar J."/>
            <person name="Haendler B."/>
            <person name="Eberspaecher U."/>
            <person name="Roostermann D."/>
            <person name="Donner P."/>
            <person name="Schleuning W.-D."/>
        </authorList>
    </citation>
    <scope>NUCLEOTIDE SEQUENCE [MRNA] (ISOFORM 1)</scope>
    <source>
        <tissue>Testis</tissue>
    </source>
</reference>
<reference key="3">
    <citation type="submission" date="2004-11" db="EMBL/GenBank/DDBJ databases">
        <title>Cloning of an isoform of TPX-1 gene related to spermatogenesis.</title>
        <authorList>
            <person name="Sha J.H."/>
            <person name="Zhou Z.M."/>
            <person name="Li J.M."/>
        </authorList>
    </citation>
    <scope>NUCLEOTIDE SEQUENCE [MRNA] (ISOFORMS 1 AND 2)</scope>
    <scope>ALTERNATIVE SPLICING</scope>
    <source>
        <tissue>Testis</tissue>
    </source>
</reference>
<reference key="4">
    <citation type="journal article" date="2004" name="Nat. Genet.">
        <title>Complete sequencing and characterization of 21,243 full-length human cDNAs.</title>
        <authorList>
            <person name="Ota T."/>
            <person name="Suzuki Y."/>
            <person name="Nishikawa T."/>
            <person name="Otsuki T."/>
            <person name="Sugiyama T."/>
            <person name="Irie R."/>
            <person name="Wakamatsu A."/>
            <person name="Hayashi K."/>
            <person name="Sato H."/>
            <person name="Nagai K."/>
            <person name="Kimura K."/>
            <person name="Makita H."/>
            <person name="Sekine M."/>
            <person name="Obayashi M."/>
            <person name="Nishi T."/>
            <person name="Shibahara T."/>
            <person name="Tanaka T."/>
            <person name="Ishii S."/>
            <person name="Yamamoto J."/>
            <person name="Saito K."/>
            <person name="Kawai Y."/>
            <person name="Isono Y."/>
            <person name="Nakamura Y."/>
            <person name="Nagahari K."/>
            <person name="Murakami K."/>
            <person name="Yasuda T."/>
            <person name="Iwayanagi T."/>
            <person name="Wagatsuma M."/>
            <person name="Shiratori A."/>
            <person name="Sudo H."/>
            <person name="Hosoiri T."/>
            <person name="Kaku Y."/>
            <person name="Kodaira H."/>
            <person name="Kondo H."/>
            <person name="Sugawara M."/>
            <person name="Takahashi M."/>
            <person name="Kanda K."/>
            <person name="Yokoi T."/>
            <person name="Furuya T."/>
            <person name="Kikkawa E."/>
            <person name="Omura Y."/>
            <person name="Abe K."/>
            <person name="Kamihara K."/>
            <person name="Katsuta N."/>
            <person name="Sato K."/>
            <person name="Tanikawa M."/>
            <person name="Yamazaki M."/>
            <person name="Ninomiya K."/>
            <person name="Ishibashi T."/>
            <person name="Yamashita H."/>
            <person name="Murakawa K."/>
            <person name="Fujimori K."/>
            <person name="Tanai H."/>
            <person name="Kimata M."/>
            <person name="Watanabe M."/>
            <person name="Hiraoka S."/>
            <person name="Chiba Y."/>
            <person name="Ishida S."/>
            <person name="Ono Y."/>
            <person name="Takiguchi S."/>
            <person name="Watanabe S."/>
            <person name="Yosida M."/>
            <person name="Hotuta T."/>
            <person name="Kusano J."/>
            <person name="Kanehori K."/>
            <person name="Takahashi-Fujii A."/>
            <person name="Hara H."/>
            <person name="Tanase T.-O."/>
            <person name="Nomura Y."/>
            <person name="Togiya S."/>
            <person name="Komai F."/>
            <person name="Hara R."/>
            <person name="Takeuchi K."/>
            <person name="Arita M."/>
            <person name="Imose N."/>
            <person name="Musashino K."/>
            <person name="Yuuki H."/>
            <person name="Oshima A."/>
            <person name="Sasaki N."/>
            <person name="Aotsuka S."/>
            <person name="Yoshikawa Y."/>
            <person name="Matsunawa H."/>
            <person name="Ichihara T."/>
            <person name="Shiohata N."/>
            <person name="Sano S."/>
            <person name="Moriya S."/>
            <person name="Momiyama H."/>
            <person name="Satoh N."/>
            <person name="Takami S."/>
            <person name="Terashima Y."/>
            <person name="Suzuki O."/>
            <person name="Nakagawa S."/>
            <person name="Senoh A."/>
            <person name="Mizoguchi H."/>
            <person name="Goto Y."/>
            <person name="Shimizu F."/>
            <person name="Wakebe H."/>
            <person name="Hishigaki H."/>
            <person name="Watanabe T."/>
            <person name="Sugiyama A."/>
            <person name="Takemoto M."/>
            <person name="Kawakami B."/>
            <person name="Yamazaki M."/>
            <person name="Watanabe K."/>
            <person name="Kumagai A."/>
            <person name="Itakura S."/>
            <person name="Fukuzumi Y."/>
            <person name="Fujimori Y."/>
            <person name="Komiyama M."/>
            <person name="Tashiro H."/>
            <person name="Tanigami A."/>
            <person name="Fujiwara T."/>
            <person name="Ono T."/>
            <person name="Yamada K."/>
            <person name="Fujii Y."/>
            <person name="Ozaki K."/>
            <person name="Hirao M."/>
            <person name="Ohmori Y."/>
            <person name="Kawabata A."/>
            <person name="Hikiji T."/>
            <person name="Kobatake N."/>
            <person name="Inagaki H."/>
            <person name="Ikema Y."/>
            <person name="Okamoto S."/>
            <person name="Okitani R."/>
            <person name="Kawakami T."/>
            <person name="Noguchi S."/>
            <person name="Itoh T."/>
            <person name="Shigeta K."/>
            <person name="Senba T."/>
            <person name="Matsumura K."/>
            <person name="Nakajima Y."/>
            <person name="Mizuno T."/>
            <person name="Morinaga M."/>
            <person name="Sasaki M."/>
            <person name="Togashi T."/>
            <person name="Oyama M."/>
            <person name="Hata H."/>
            <person name="Watanabe M."/>
            <person name="Komatsu T."/>
            <person name="Mizushima-Sugano J."/>
            <person name="Satoh T."/>
            <person name="Shirai Y."/>
            <person name="Takahashi Y."/>
            <person name="Nakagawa K."/>
            <person name="Okumura K."/>
            <person name="Nagase T."/>
            <person name="Nomura N."/>
            <person name="Kikuchi H."/>
            <person name="Masuho Y."/>
            <person name="Yamashita R."/>
            <person name="Nakai K."/>
            <person name="Yada T."/>
            <person name="Nakamura Y."/>
            <person name="Ohara O."/>
            <person name="Isogai T."/>
            <person name="Sugano S."/>
        </authorList>
    </citation>
    <scope>NUCLEOTIDE SEQUENCE [LARGE SCALE MRNA] (ISOFORM 1)</scope>
    <source>
        <tissue>Testis</tissue>
    </source>
</reference>
<reference key="5">
    <citation type="submission" date="2005-04" db="EMBL/GenBank/DDBJ databases">
        <authorList>
            <person name="Suzuki Y."/>
            <person name="Sugano S."/>
            <person name="Totoki Y."/>
            <person name="Toyoda A."/>
            <person name="Takeda T."/>
            <person name="Sakaki Y."/>
            <person name="Tanaka A."/>
            <person name="Yokoyama S."/>
        </authorList>
    </citation>
    <scope>NUCLEOTIDE SEQUENCE [LARGE SCALE MRNA] (ISOFORM 1)</scope>
    <source>
        <tissue>Testis</tissue>
    </source>
</reference>
<reference key="6">
    <citation type="journal article" date="2003" name="Nature">
        <title>The DNA sequence and analysis of human chromosome 6.</title>
        <authorList>
            <person name="Mungall A.J."/>
            <person name="Palmer S.A."/>
            <person name="Sims S.K."/>
            <person name="Edwards C.A."/>
            <person name="Ashurst J.L."/>
            <person name="Wilming L."/>
            <person name="Jones M.C."/>
            <person name="Horton R."/>
            <person name="Hunt S.E."/>
            <person name="Scott C.E."/>
            <person name="Gilbert J.G.R."/>
            <person name="Clamp M.E."/>
            <person name="Bethel G."/>
            <person name="Milne S."/>
            <person name="Ainscough R."/>
            <person name="Almeida J.P."/>
            <person name="Ambrose K.D."/>
            <person name="Andrews T.D."/>
            <person name="Ashwell R.I.S."/>
            <person name="Babbage A.K."/>
            <person name="Bagguley C.L."/>
            <person name="Bailey J."/>
            <person name="Banerjee R."/>
            <person name="Barker D.J."/>
            <person name="Barlow K.F."/>
            <person name="Bates K."/>
            <person name="Beare D.M."/>
            <person name="Beasley H."/>
            <person name="Beasley O."/>
            <person name="Bird C.P."/>
            <person name="Blakey S.E."/>
            <person name="Bray-Allen S."/>
            <person name="Brook J."/>
            <person name="Brown A.J."/>
            <person name="Brown J.Y."/>
            <person name="Burford D.C."/>
            <person name="Burrill W."/>
            <person name="Burton J."/>
            <person name="Carder C."/>
            <person name="Carter N.P."/>
            <person name="Chapman J.C."/>
            <person name="Clark S.Y."/>
            <person name="Clark G."/>
            <person name="Clee C.M."/>
            <person name="Clegg S."/>
            <person name="Cobley V."/>
            <person name="Collier R.E."/>
            <person name="Collins J.E."/>
            <person name="Colman L.K."/>
            <person name="Corby N.R."/>
            <person name="Coville G.J."/>
            <person name="Culley K.M."/>
            <person name="Dhami P."/>
            <person name="Davies J."/>
            <person name="Dunn M."/>
            <person name="Earthrowl M.E."/>
            <person name="Ellington A.E."/>
            <person name="Evans K.A."/>
            <person name="Faulkner L."/>
            <person name="Francis M.D."/>
            <person name="Frankish A."/>
            <person name="Frankland J."/>
            <person name="French L."/>
            <person name="Garner P."/>
            <person name="Garnett J."/>
            <person name="Ghori M.J."/>
            <person name="Gilby L.M."/>
            <person name="Gillson C.J."/>
            <person name="Glithero R.J."/>
            <person name="Grafham D.V."/>
            <person name="Grant M."/>
            <person name="Gribble S."/>
            <person name="Griffiths C."/>
            <person name="Griffiths M.N.D."/>
            <person name="Hall R."/>
            <person name="Halls K.S."/>
            <person name="Hammond S."/>
            <person name="Harley J.L."/>
            <person name="Hart E.A."/>
            <person name="Heath P.D."/>
            <person name="Heathcott R."/>
            <person name="Holmes S.J."/>
            <person name="Howden P.J."/>
            <person name="Howe K.L."/>
            <person name="Howell G.R."/>
            <person name="Huckle E."/>
            <person name="Humphray S.J."/>
            <person name="Humphries M.D."/>
            <person name="Hunt A.R."/>
            <person name="Johnson C.M."/>
            <person name="Joy A.A."/>
            <person name="Kay M."/>
            <person name="Keenan S.J."/>
            <person name="Kimberley A.M."/>
            <person name="King A."/>
            <person name="Laird G.K."/>
            <person name="Langford C."/>
            <person name="Lawlor S."/>
            <person name="Leongamornlert D.A."/>
            <person name="Leversha M."/>
            <person name="Lloyd C.R."/>
            <person name="Lloyd D.M."/>
            <person name="Loveland J.E."/>
            <person name="Lovell J."/>
            <person name="Martin S."/>
            <person name="Mashreghi-Mohammadi M."/>
            <person name="Maslen G.L."/>
            <person name="Matthews L."/>
            <person name="McCann O.T."/>
            <person name="McLaren S.J."/>
            <person name="McLay K."/>
            <person name="McMurray A."/>
            <person name="Moore M.J.F."/>
            <person name="Mullikin J.C."/>
            <person name="Niblett D."/>
            <person name="Nickerson T."/>
            <person name="Novik K.L."/>
            <person name="Oliver K."/>
            <person name="Overton-Larty E.K."/>
            <person name="Parker A."/>
            <person name="Patel R."/>
            <person name="Pearce A.V."/>
            <person name="Peck A.I."/>
            <person name="Phillimore B.J.C.T."/>
            <person name="Phillips S."/>
            <person name="Plumb R.W."/>
            <person name="Porter K.M."/>
            <person name="Ramsey Y."/>
            <person name="Ranby S.A."/>
            <person name="Rice C.M."/>
            <person name="Ross M.T."/>
            <person name="Searle S.M."/>
            <person name="Sehra H.K."/>
            <person name="Sheridan E."/>
            <person name="Skuce C.D."/>
            <person name="Smith S."/>
            <person name="Smith M."/>
            <person name="Spraggon L."/>
            <person name="Squares S.L."/>
            <person name="Steward C.A."/>
            <person name="Sycamore N."/>
            <person name="Tamlyn-Hall G."/>
            <person name="Tester J."/>
            <person name="Theaker A.J."/>
            <person name="Thomas D.W."/>
            <person name="Thorpe A."/>
            <person name="Tracey A."/>
            <person name="Tromans A."/>
            <person name="Tubby B."/>
            <person name="Wall M."/>
            <person name="Wallis J.M."/>
            <person name="West A.P."/>
            <person name="White S.S."/>
            <person name="Whitehead S.L."/>
            <person name="Whittaker H."/>
            <person name="Wild A."/>
            <person name="Willey D.J."/>
            <person name="Wilmer T.E."/>
            <person name="Wood J.M."/>
            <person name="Wray P.W."/>
            <person name="Wyatt J.C."/>
            <person name="Young L."/>
            <person name="Younger R.M."/>
            <person name="Bentley D.R."/>
            <person name="Coulson A."/>
            <person name="Durbin R.M."/>
            <person name="Hubbard T."/>
            <person name="Sulston J.E."/>
            <person name="Dunham I."/>
            <person name="Rogers J."/>
            <person name="Beck S."/>
        </authorList>
    </citation>
    <scope>NUCLEOTIDE SEQUENCE [LARGE SCALE GENOMIC DNA]</scope>
</reference>
<reference key="7">
    <citation type="submission" date="2005-07" db="EMBL/GenBank/DDBJ databases">
        <authorList>
            <person name="Mural R.J."/>
            <person name="Istrail S."/>
            <person name="Sutton G."/>
            <person name="Florea L."/>
            <person name="Halpern A.L."/>
            <person name="Mobarry C.M."/>
            <person name="Lippert R."/>
            <person name="Walenz B."/>
            <person name="Shatkay H."/>
            <person name="Dew I."/>
            <person name="Miller J.R."/>
            <person name="Flanigan M.J."/>
            <person name="Edwards N.J."/>
            <person name="Bolanos R."/>
            <person name="Fasulo D."/>
            <person name="Halldorsson B.V."/>
            <person name="Hannenhalli S."/>
            <person name="Turner R."/>
            <person name="Yooseph S."/>
            <person name="Lu F."/>
            <person name="Nusskern D.R."/>
            <person name="Shue B.C."/>
            <person name="Zheng X.H."/>
            <person name="Zhong F."/>
            <person name="Delcher A.L."/>
            <person name="Huson D.H."/>
            <person name="Kravitz S.A."/>
            <person name="Mouchard L."/>
            <person name="Reinert K."/>
            <person name="Remington K.A."/>
            <person name="Clark A.G."/>
            <person name="Waterman M.S."/>
            <person name="Eichler E.E."/>
            <person name="Adams M.D."/>
            <person name="Hunkapiller M.W."/>
            <person name="Myers E.W."/>
            <person name="Venter J.C."/>
        </authorList>
    </citation>
    <scope>NUCLEOTIDE SEQUENCE [LARGE SCALE GENOMIC DNA]</scope>
</reference>
<reference key="8">
    <citation type="journal article" date="2004" name="Genome Res.">
        <title>The status, quality, and expansion of the NIH full-length cDNA project: the Mammalian Gene Collection (MGC).</title>
        <authorList>
            <consortium name="The MGC Project Team"/>
        </authorList>
    </citation>
    <scope>NUCLEOTIDE SEQUENCE [LARGE SCALE MRNA] (ISOFORM 1)</scope>
    <source>
        <tissue>Testis</tissue>
    </source>
</reference>
<reference key="9">
    <citation type="submission" date="2005-11" db="PDB data bank">
        <title>Solution structure of RSGI RUH-032, a cysteine-rich domain of CRISP-2 from human.</title>
        <authorList>
            <consortium name="RIKEN structural genomics initiative (RSGI)"/>
        </authorList>
    </citation>
    <scope>STRUCTURE BY NMR OF 204-239</scope>
</reference>
<proteinExistence type="evidence at protein level"/>
<protein>
    <recommendedName>
        <fullName>Cysteine-rich secretory protein 2</fullName>
        <shortName>CRISP-2</shortName>
    </recommendedName>
    <alternativeName>
        <fullName>Cancer/testis antigen 36</fullName>
        <shortName>CT36</shortName>
    </alternativeName>
    <alternativeName>
        <fullName>Testis-specific protein TPX-1</fullName>
    </alternativeName>
</protein>
<organism>
    <name type="scientific">Homo sapiens</name>
    <name type="common">Human</name>
    <dbReference type="NCBI Taxonomy" id="9606"/>
    <lineage>
        <taxon>Eukaryota</taxon>
        <taxon>Metazoa</taxon>
        <taxon>Chordata</taxon>
        <taxon>Craniata</taxon>
        <taxon>Vertebrata</taxon>
        <taxon>Euteleostomi</taxon>
        <taxon>Mammalia</taxon>
        <taxon>Eutheria</taxon>
        <taxon>Euarchontoglires</taxon>
        <taxon>Primates</taxon>
        <taxon>Haplorrhini</taxon>
        <taxon>Catarrhini</taxon>
        <taxon>Hominidae</taxon>
        <taxon>Homo</taxon>
    </lineage>
</organism>
<sequence>MALLPVLFLVTVLLPSLPAEGKDPAFTALLTTQLQVQREIVNKHNELRKAVSPPASNMLKMEWSREVTTNAQRWANKCTLQHSDPEDRKTSTRCGENLYMSSDPTSWSSAIQSWYDEILDFVYGVGPKSPNAVVGHYTQLVWYSTYQVGCGIAYCPNQDSLKYYYVCQYCPAGNNMNRKNTPYQQGTPCAGCPDDCDKGLCTNSCQYQDLLSNCDSLKNTAGCEHELLKEKCKATCLCENKIY</sequence>